<accession>B5RFB0</accession>
<dbReference type="EMBL" id="AM933173">
    <property type="protein sequence ID" value="CAR39153.1"/>
    <property type="molecule type" value="Genomic_DNA"/>
</dbReference>
<dbReference type="RefSeq" id="WP_001077320.1">
    <property type="nucleotide sequence ID" value="NC_011274.1"/>
</dbReference>
<dbReference type="SMR" id="B5RFB0"/>
<dbReference type="KEGG" id="seg:SG3360"/>
<dbReference type="HOGENOM" id="CLU_013430_3_0_6"/>
<dbReference type="Proteomes" id="UP000008321">
    <property type="component" value="Chromosome"/>
</dbReference>
<dbReference type="GO" id="GO:0005886">
    <property type="term" value="C:plasma membrane"/>
    <property type="evidence" value="ECO:0007669"/>
    <property type="project" value="UniProtKB-SubCell"/>
</dbReference>
<dbReference type="GO" id="GO:0015086">
    <property type="term" value="F:cadmium ion transmembrane transporter activity"/>
    <property type="evidence" value="ECO:0007669"/>
    <property type="project" value="UniProtKB-UniRule"/>
</dbReference>
<dbReference type="GO" id="GO:0015093">
    <property type="term" value="F:ferrous iron transmembrane transporter activity"/>
    <property type="evidence" value="ECO:0007669"/>
    <property type="project" value="TreeGrafter"/>
</dbReference>
<dbReference type="GO" id="GO:0046872">
    <property type="term" value="F:metal ion binding"/>
    <property type="evidence" value="ECO:0007669"/>
    <property type="project" value="UniProtKB-KW"/>
</dbReference>
<dbReference type="GO" id="GO:0015341">
    <property type="term" value="F:zinc efflux antiporter activity"/>
    <property type="evidence" value="ECO:0007669"/>
    <property type="project" value="TreeGrafter"/>
</dbReference>
<dbReference type="GO" id="GO:0006882">
    <property type="term" value="P:intracellular zinc ion homeostasis"/>
    <property type="evidence" value="ECO:0007669"/>
    <property type="project" value="TreeGrafter"/>
</dbReference>
<dbReference type="FunFam" id="1.20.1510.10:FF:000001">
    <property type="entry name" value="Ferrous-iron efflux pump FieF"/>
    <property type="match status" value="1"/>
</dbReference>
<dbReference type="FunFam" id="3.30.70.1350:FF:000002">
    <property type="entry name" value="Ferrous-iron efflux pump FieF"/>
    <property type="match status" value="1"/>
</dbReference>
<dbReference type="Gene3D" id="1.20.1510.10">
    <property type="entry name" value="Cation efflux protein transmembrane domain"/>
    <property type="match status" value="1"/>
</dbReference>
<dbReference type="Gene3D" id="3.30.70.1350">
    <property type="entry name" value="Cation efflux protein, cytoplasmic domain"/>
    <property type="match status" value="1"/>
</dbReference>
<dbReference type="HAMAP" id="MF_01425">
    <property type="entry name" value="Cation_efflux_FieF"/>
    <property type="match status" value="1"/>
</dbReference>
<dbReference type="InterPro" id="IPR002524">
    <property type="entry name" value="Cation_efflux"/>
</dbReference>
<dbReference type="InterPro" id="IPR027470">
    <property type="entry name" value="Cation_efflux_CTD"/>
</dbReference>
<dbReference type="InterPro" id="IPR036837">
    <property type="entry name" value="Cation_efflux_CTD_sf"/>
</dbReference>
<dbReference type="InterPro" id="IPR023783">
    <property type="entry name" value="Cation_efflux_FieF"/>
</dbReference>
<dbReference type="InterPro" id="IPR027469">
    <property type="entry name" value="Cation_efflux_TMD_sf"/>
</dbReference>
<dbReference type="InterPro" id="IPR050291">
    <property type="entry name" value="CDF_Transporter"/>
</dbReference>
<dbReference type="NCBIfam" id="TIGR01297">
    <property type="entry name" value="CDF"/>
    <property type="match status" value="1"/>
</dbReference>
<dbReference type="NCBIfam" id="NF007064">
    <property type="entry name" value="PRK09509.1"/>
    <property type="match status" value="1"/>
</dbReference>
<dbReference type="PANTHER" id="PTHR43840:SF41">
    <property type="entry name" value="CATION-EFFLUX PUMP FIEF"/>
    <property type="match status" value="1"/>
</dbReference>
<dbReference type="PANTHER" id="PTHR43840">
    <property type="entry name" value="MITOCHONDRIAL METAL TRANSPORTER 1-RELATED"/>
    <property type="match status" value="1"/>
</dbReference>
<dbReference type="Pfam" id="PF01545">
    <property type="entry name" value="Cation_efflux"/>
    <property type="match status" value="1"/>
</dbReference>
<dbReference type="Pfam" id="PF16916">
    <property type="entry name" value="ZT_dimer"/>
    <property type="match status" value="1"/>
</dbReference>
<dbReference type="SUPFAM" id="SSF160240">
    <property type="entry name" value="Cation efflux protein cytoplasmic domain-like"/>
    <property type="match status" value="1"/>
</dbReference>
<dbReference type="SUPFAM" id="SSF161111">
    <property type="entry name" value="Cation efflux protein transmembrane domain-like"/>
    <property type="match status" value="1"/>
</dbReference>
<protein>
    <recommendedName>
        <fullName evidence="1">Cation-efflux pump FieF</fullName>
    </recommendedName>
</protein>
<keyword id="KW-0997">Cell inner membrane</keyword>
<keyword id="KW-1003">Cell membrane</keyword>
<keyword id="KW-0406">Ion transport</keyword>
<keyword id="KW-0408">Iron</keyword>
<keyword id="KW-0410">Iron transport</keyword>
<keyword id="KW-0472">Membrane</keyword>
<keyword id="KW-0479">Metal-binding</keyword>
<keyword id="KW-0812">Transmembrane</keyword>
<keyword id="KW-1133">Transmembrane helix</keyword>
<keyword id="KW-0813">Transport</keyword>
<keyword id="KW-0862">Zinc</keyword>
<keyword id="KW-0864">Zinc transport</keyword>
<sequence length="300" mass="32974">MNQTYGRLVSRAAIAATAMASALLLIKIFAWWYTGSVSILAALVDSLVDIAASLTNLLVVRYSLQPADDEHTFGHGKAESLAALAQSMFISGSALFLFLTSIQNLIKPTPMNDPGVGIGVTVIALICTIILVTFQRWVVRKTQSQAVRADMLHYQSDVMMNGAILIALGLSWYGWHRADALFALGIGIYILYSALRMGYEAVQSLLDRALPDAERQEIIDIVTSWPGVSGAHDLRTRQSGPTRFIQIHLEMEDNLPLVQAHFVADQVEQAILQRFPGSDVIIHQDPCSVVPREGRKFELV</sequence>
<name>FIEF_SALG2</name>
<proteinExistence type="inferred from homology"/>
<organism>
    <name type="scientific">Salmonella gallinarum (strain 287/91 / NCTC 13346)</name>
    <dbReference type="NCBI Taxonomy" id="550538"/>
    <lineage>
        <taxon>Bacteria</taxon>
        <taxon>Pseudomonadati</taxon>
        <taxon>Pseudomonadota</taxon>
        <taxon>Gammaproteobacteria</taxon>
        <taxon>Enterobacterales</taxon>
        <taxon>Enterobacteriaceae</taxon>
        <taxon>Salmonella</taxon>
    </lineage>
</organism>
<comment type="function">
    <text evidence="1">Divalent metal cation transporter which exports Zn(2+), Cd(2+) and possibly Fe(2+). May be involved in zinc and iron detoxification by efflux.</text>
</comment>
<comment type="catalytic activity">
    <reaction evidence="1">
        <text>Zn(2+)(in) + H(+)(out) = Zn(2+)(out) + H(+)(in)</text>
        <dbReference type="Rhea" id="RHEA:28839"/>
        <dbReference type="ChEBI" id="CHEBI:15378"/>
        <dbReference type="ChEBI" id="CHEBI:29105"/>
    </reaction>
</comment>
<comment type="catalytic activity">
    <reaction evidence="1">
        <text>Cd(2+)(in) + H(+)(out) = Cd(2+)(out) + H(+)(in)</text>
        <dbReference type="Rhea" id="RHEA:28739"/>
        <dbReference type="ChEBI" id="CHEBI:15378"/>
        <dbReference type="ChEBI" id="CHEBI:48775"/>
    </reaction>
</comment>
<comment type="catalytic activity">
    <reaction evidence="1">
        <text>Fe(2+)(in) + H(+)(out) = Fe(2+)(out) + H(+)(in)</text>
        <dbReference type="Rhea" id="RHEA:29439"/>
        <dbReference type="ChEBI" id="CHEBI:15378"/>
        <dbReference type="ChEBI" id="CHEBI:29033"/>
    </reaction>
</comment>
<comment type="subunit">
    <text evidence="1">Homodimer.</text>
</comment>
<comment type="subcellular location">
    <subcellularLocation>
        <location evidence="1">Cell inner membrane</location>
        <topology evidence="1">Multi-pass membrane protein</topology>
    </subcellularLocation>
</comment>
<comment type="similarity">
    <text evidence="1">Belongs to the cation diffusion facilitator (CDF) transporter (TC 2.A.4) family. FieF subfamily.</text>
</comment>
<evidence type="ECO:0000255" key="1">
    <source>
        <dbReference type="HAMAP-Rule" id="MF_01425"/>
    </source>
</evidence>
<reference key="1">
    <citation type="journal article" date="2008" name="Genome Res.">
        <title>Comparative genome analysis of Salmonella enteritidis PT4 and Salmonella gallinarum 287/91 provides insights into evolutionary and host adaptation pathways.</title>
        <authorList>
            <person name="Thomson N.R."/>
            <person name="Clayton D.J."/>
            <person name="Windhorst D."/>
            <person name="Vernikos G."/>
            <person name="Davidson S."/>
            <person name="Churcher C."/>
            <person name="Quail M.A."/>
            <person name="Stevens M."/>
            <person name="Jones M.A."/>
            <person name="Watson M."/>
            <person name="Barron A."/>
            <person name="Layton A."/>
            <person name="Pickard D."/>
            <person name="Kingsley R.A."/>
            <person name="Bignell A."/>
            <person name="Clark L."/>
            <person name="Harris B."/>
            <person name="Ormond D."/>
            <person name="Abdellah Z."/>
            <person name="Brooks K."/>
            <person name="Cherevach I."/>
            <person name="Chillingworth T."/>
            <person name="Woodward J."/>
            <person name="Norberczak H."/>
            <person name="Lord A."/>
            <person name="Arrowsmith C."/>
            <person name="Jagels K."/>
            <person name="Moule S."/>
            <person name="Mungall K."/>
            <person name="Saunders M."/>
            <person name="Whitehead S."/>
            <person name="Chabalgoity J.A."/>
            <person name="Maskell D."/>
            <person name="Humphreys T."/>
            <person name="Roberts M."/>
            <person name="Barrow P.A."/>
            <person name="Dougan G."/>
            <person name="Parkhill J."/>
        </authorList>
    </citation>
    <scope>NUCLEOTIDE SEQUENCE [LARGE SCALE GENOMIC DNA]</scope>
    <source>
        <strain>287/91 / NCTC 13346</strain>
    </source>
</reference>
<feature type="chain" id="PRO_1000145702" description="Cation-efflux pump FieF">
    <location>
        <begin position="1"/>
        <end position="300"/>
    </location>
</feature>
<feature type="transmembrane region" description="Helical" evidence="1">
    <location>
        <begin position="24"/>
        <end position="44"/>
    </location>
</feature>
<feature type="transmembrane region" description="Helical" evidence="1">
    <location>
        <begin position="82"/>
        <end position="102"/>
    </location>
</feature>
<feature type="transmembrane region" description="Helical" evidence="1">
    <location>
        <begin position="114"/>
        <end position="134"/>
    </location>
</feature>
<feature type="transmembrane region" description="Helical" evidence="1">
    <location>
        <begin position="156"/>
        <end position="176"/>
    </location>
</feature>
<feature type="transmembrane region" description="Helical" evidence="1">
    <location>
        <begin position="178"/>
        <end position="198"/>
    </location>
</feature>
<feature type="binding site" evidence="1">
    <location>
        <position position="45"/>
    </location>
    <ligand>
        <name>Zn(2+)</name>
        <dbReference type="ChEBI" id="CHEBI:29105"/>
    </ligand>
</feature>
<feature type="binding site" evidence="1">
    <location>
        <position position="49"/>
    </location>
    <ligand>
        <name>Zn(2+)</name>
        <dbReference type="ChEBI" id="CHEBI:29105"/>
    </ligand>
</feature>
<feature type="binding site" evidence="1">
    <location>
        <position position="153"/>
    </location>
    <ligand>
        <name>Zn(2+)</name>
        <dbReference type="ChEBI" id="CHEBI:29105"/>
    </ligand>
</feature>
<feature type="binding site" evidence="1">
    <location>
        <position position="157"/>
    </location>
    <ligand>
        <name>Zn(2+)</name>
        <dbReference type="ChEBI" id="CHEBI:29105"/>
    </ligand>
</feature>
<gene>
    <name evidence="1" type="primary">fieF</name>
    <name type="ordered locus">SG3360</name>
</gene>